<evidence type="ECO:0000255" key="1"/>
<name>YWTC_BACSU</name>
<proteinExistence type="inferred from homology"/>
<dbReference type="EMBL" id="Z92954">
    <property type="protein sequence ID" value="CAB07470.1"/>
    <property type="molecule type" value="Genomic_DNA"/>
</dbReference>
<dbReference type="EMBL" id="AB039950">
    <property type="protein sequence ID" value="BAB13487.1"/>
    <property type="molecule type" value="Genomic_DNA"/>
</dbReference>
<dbReference type="EMBL" id="AB046355">
    <property type="protein sequence ID" value="BAB40951.1"/>
    <property type="molecule type" value="Genomic_DNA"/>
</dbReference>
<dbReference type="EMBL" id="AL009126">
    <property type="protein sequence ID" value="CAB15604.1"/>
    <property type="molecule type" value="Genomic_DNA"/>
</dbReference>
<dbReference type="PIR" id="A70070">
    <property type="entry name" value="A70070"/>
</dbReference>
<dbReference type="SMR" id="P96739"/>
<dbReference type="FunCoup" id="P96739">
    <property type="interactions" value="78"/>
</dbReference>
<dbReference type="STRING" id="224308.BSU35870"/>
<dbReference type="PaxDb" id="224308-BSU35870"/>
<dbReference type="EnsemblBacteria" id="CAB15604">
    <property type="protein sequence ID" value="CAB15604"/>
    <property type="gene ID" value="BSU_35870"/>
</dbReference>
<dbReference type="GeneID" id="936828"/>
<dbReference type="KEGG" id="bsu:BSU35870"/>
<dbReference type="PATRIC" id="fig|224308.179.peg.3883"/>
<dbReference type="eggNOG" id="ENOG5030BU5">
    <property type="taxonomic scope" value="Bacteria"/>
</dbReference>
<dbReference type="InParanoid" id="P96739"/>
<dbReference type="OrthoDB" id="2911491at2"/>
<dbReference type="BioCyc" id="BSUB:BSU35870-MONOMER"/>
<dbReference type="Proteomes" id="UP000001570">
    <property type="component" value="Chromosome"/>
</dbReference>
<gene>
    <name type="primary">ywtC</name>
    <name type="ordered locus">BSU35870</name>
</gene>
<sequence>MKFVKAIWPFVAVAIVFMFMSAFKFNDQLTDQEKQKIDMEMNKIQQQEEPVNANK</sequence>
<feature type="signal peptide" evidence="1">
    <location>
        <begin position="1"/>
        <end position="25"/>
    </location>
</feature>
<feature type="chain" id="PRO_0000013741" description="Uncharacterized protein YwtC">
    <location>
        <begin position="26"/>
        <end position="55"/>
    </location>
</feature>
<accession>P96739</accession>
<organism>
    <name type="scientific">Bacillus subtilis (strain 168)</name>
    <dbReference type="NCBI Taxonomy" id="224308"/>
    <lineage>
        <taxon>Bacteria</taxon>
        <taxon>Bacillati</taxon>
        <taxon>Bacillota</taxon>
        <taxon>Bacilli</taxon>
        <taxon>Bacillales</taxon>
        <taxon>Bacillaceae</taxon>
        <taxon>Bacillus</taxon>
    </lineage>
</organism>
<reference key="1">
    <citation type="journal article" date="1997" name="Microbiology">
        <title>The Bacillus subtilis genome from gerBC (311 degrees) to licR (334 degrees).</title>
        <authorList>
            <person name="Presecan E."/>
            <person name="Moszer I."/>
            <person name="Boursier L."/>
            <person name="Cruz Ramos H."/>
            <person name="De La Fuente V."/>
            <person name="Hullo M.-F."/>
            <person name="Lelong C."/>
            <person name="Schleich S."/>
            <person name="Sekowska A."/>
            <person name="Song B.H."/>
            <person name="Villani G."/>
            <person name="Kunst F."/>
            <person name="Danchin A."/>
            <person name="Glaser P."/>
        </authorList>
    </citation>
    <scope>NUCLEOTIDE SEQUENCE [GENOMIC DNA]</scope>
    <source>
        <strain>168</strain>
    </source>
</reference>
<reference key="2">
    <citation type="submission" date="2000-03" db="EMBL/GenBank/DDBJ databases">
        <title>Nucleotide sequence of the capBCA operon in Bacillus subtilis (natto).</title>
        <authorList>
            <person name="Tran L.P."/>
            <person name="Itoh Y."/>
        </authorList>
    </citation>
    <scope>NUCLEOTIDE SEQUENCE [GENOMIC DNA]</scope>
    <source>
        <strain>Asahikawa</strain>
    </source>
</reference>
<reference key="3">
    <citation type="journal article" date="2002" name="J. Bacteriol.">
        <title>Characterization of the Bacillus subtilis ywsC gene, involved in gamma-polyglutamic acid production.</title>
        <authorList>
            <person name="Urushibata Y."/>
            <person name="Tokuyama S."/>
            <person name="Tahara Y."/>
        </authorList>
    </citation>
    <scope>NUCLEOTIDE SEQUENCE [GENOMIC DNA]</scope>
    <source>
        <strain>NBRC 16449</strain>
    </source>
</reference>
<reference key="4">
    <citation type="journal article" date="1997" name="Nature">
        <title>The complete genome sequence of the Gram-positive bacterium Bacillus subtilis.</title>
        <authorList>
            <person name="Kunst F."/>
            <person name="Ogasawara N."/>
            <person name="Moszer I."/>
            <person name="Albertini A.M."/>
            <person name="Alloni G."/>
            <person name="Azevedo V."/>
            <person name="Bertero M.G."/>
            <person name="Bessieres P."/>
            <person name="Bolotin A."/>
            <person name="Borchert S."/>
            <person name="Borriss R."/>
            <person name="Boursier L."/>
            <person name="Brans A."/>
            <person name="Braun M."/>
            <person name="Brignell S.C."/>
            <person name="Bron S."/>
            <person name="Brouillet S."/>
            <person name="Bruschi C.V."/>
            <person name="Caldwell B."/>
            <person name="Capuano V."/>
            <person name="Carter N.M."/>
            <person name="Choi S.-K."/>
            <person name="Codani J.-J."/>
            <person name="Connerton I.F."/>
            <person name="Cummings N.J."/>
            <person name="Daniel R.A."/>
            <person name="Denizot F."/>
            <person name="Devine K.M."/>
            <person name="Duesterhoeft A."/>
            <person name="Ehrlich S.D."/>
            <person name="Emmerson P.T."/>
            <person name="Entian K.-D."/>
            <person name="Errington J."/>
            <person name="Fabret C."/>
            <person name="Ferrari E."/>
            <person name="Foulger D."/>
            <person name="Fritz C."/>
            <person name="Fujita M."/>
            <person name="Fujita Y."/>
            <person name="Fuma S."/>
            <person name="Galizzi A."/>
            <person name="Galleron N."/>
            <person name="Ghim S.-Y."/>
            <person name="Glaser P."/>
            <person name="Goffeau A."/>
            <person name="Golightly E.J."/>
            <person name="Grandi G."/>
            <person name="Guiseppi G."/>
            <person name="Guy B.J."/>
            <person name="Haga K."/>
            <person name="Haiech J."/>
            <person name="Harwood C.R."/>
            <person name="Henaut A."/>
            <person name="Hilbert H."/>
            <person name="Holsappel S."/>
            <person name="Hosono S."/>
            <person name="Hullo M.-F."/>
            <person name="Itaya M."/>
            <person name="Jones L.-M."/>
            <person name="Joris B."/>
            <person name="Karamata D."/>
            <person name="Kasahara Y."/>
            <person name="Klaerr-Blanchard M."/>
            <person name="Klein C."/>
            <person name="Kobayashi Y."/>
            <person name="Koetter P."/>
            <person name="Koningstein G."/>
            <person name="Krogh S."/>
            <person name="Kumano M."/>
            <person name="Kurita K."/>
            <person name="Lapidus A."/>
            <person name="Lardinois S."/>
            <person name="Lauber J."/>
            <person name="Lazarevic V."/>
            <person name="Lee S.-M."/>
            <person name="Levine A."/>
            <person name="Liu H."/>
            <person name="Masuda S."/>
            <person name="Mauel C."/>
            <person name="Medigue C."/>
            <person name="Medina N."/>
            <person name="Mellado R.P."/>
            <person name="Mizuno M."/>
            <person name="Moestl D."/>
            <person name="Nakai S."/>
            <person name="Noback M."/>
            <person name="Noone D."/>
            <person name="O'Reilly M."/>
            <person name="Ogawa K."/>
            <person name="Ogiwara A."/>
            <person name="Oudega B."/>
            <person name="Park S.-H."/>
            <person name="Parro V."/>
            <person name="Pohl T.M."/>
            <person name="Portetelle D."/>
            <person name="Porwollik S."/>
            <person name="Prescott A.M."/>
            <person name="Presecan E."/>
            <person name="Pujic P."/>
            <person name="Purnelle B."/>
            <person name="Rapoport G."/>
            <person name="Rey M."/>
            <person name="Reynolds S."/>
            <person name="Rieger M."/>
            <person name="Rivolta C."/>
            <person name="Rocha E."/>
            <person name="Roche B."/>
            <person name="Rose M."/>
            <person name="Sadaie Y."/>
            <person name="Sato T."/>
            <person name="Scanlan E."/>
            <person name="Schleich S."/>
            <person name="Schroeter R."/>
            <person name="Scoffone F."/>
            <person name="Sekiguchi J."/>
            <person name="Sekowska A."/>
            <person name="Seror S.J."/>
            <person name="Serror P."/>
            <person name="Shin B.-S."/>
            <person name="Soldo B."/>
            <person name="Sorokin A."/>
            <person name="Tacconi E."/>
            <person name="Takagi T."/>
            <person name="Takahashi H."/>
            <person name="Takemaru K."/>
            <person name="Takeuchi M."/>
            <person name="Tamakoshi A."/>
            <person name="Tanaka T."/>
            <person name="Terpstra P."/>
            <person name="Tognoni A."/>
            <person name="Tosato V."/>
            <person name="Uchiyama S."/>
            <person name="Vandenbol M."/>
            <person name="Vannier F."/>
            <person name="Vassarotti A."/>
            <person name="Viari A."/>
            <person name="Wambutt R."/>
            <person name="Wedler E."/>
            <person name="Wedler H."/>
            <person name="Weitzenegger T."/>
            <person name="Winters P."/>
            <person name="Wipat A."/>
            <person name="Yamamoto H."/>
            <person name="Yamane K."/>
            <person name="Yasumoto K."/>
            <person name="Yata K."/>
            <person name="Yoshida K."/>
            <person name="Yoshikawa H.-F."/>
            <person name="Zumstein E."/>
            <person name="Yoshikawa H."/>
            <person name="Danchin A."/>
        </authorList>
    </citation>
    <scope>NUCLEOTIDE SEQUENCE [LARGE SCALE GENOMIC DNA]</scope>
    <source>
        <strain>168</strain>
    </source>
</reference>
<keyword id="KW-1185">Reference proteome</keyword>
<keyword id="KW-0732">Signal</keyword>
<protein>
    <recommendedName>
        <fullName>Uncharacterized protein YwtC</fullName>
    </recommendedName>
</protein>